<protein>
    <recommendedName>
        <fullName evidence="1">ATP-dependent RNA helicase DeaD</fullName>
        <ecNumber evidence="1">3.6.4.13</ecNumber>
    </recommendedName>
    <alternativeName>
        <fullName evidence="1">Cold-shock DEAD box protein A</fullName>
    </alternativeName>
</protein>
<feature type="chain" id="PRO_0000055100" description="ATP-dependent RNA helicase DeaD">
    <location>
        <begin position="1"/>
        <end position="602"/>
    </location>
</feature>
<feature type="domain" description="Helicase ATP-binding" evidence="1">
    <location>
        <begin position="37"/>
        <end position="208"/>
    </location>
</feature>
<feature type="domain" description="Helicase C-terminal" evidence="1">
    <location>
        <begin position="231"/>
        <end position="378"/>
    </location>
</feature>
<feature type="short sequence motif" description="Q motif">
    <location>
        <begin position="6"/>
        <end position="34"/>
    </location>
</feature>
<feature type="short sequence motif" description="DEAD box">
    <location>
        <begin position="156"/>
        <end position="159"/>
    </location>
</feature>
<feature type="binding site" evidence="1">
    <location>
        <begin position="50"/>
        <end position="57"/>
    </location>
    <ligand>
        <name>ATP</name>
        <dbReference type="ChEBI" id="CHEBI:30616"/>
    </ligand>
</feature>
<evidence type="ECO:0000255" key="1">
    <source>
        <dbReference type="HAMAP-Rule" id="MF_00964"/>
    </source>
</evidence>
<gene>
    <name evidence="1" type="primary">deaD</name>
    <name evidence="1" type="synonym">csdA</name>
    <name type="ordered locus">bbp_335</name>
</gene>
<comment type="function">
    <text evidence="1">DEAD-box RNA helicase involved in various cellular processes at low temperature, including ribosome biogenesis, mRNA degradation and translation initiation.</text>
</comment>
<comment type="catalytic activity">
    <reaction evidence="1">
        <text>ATP + H2O = ADP + phosphate + H(+)</text>
        <dbReference type="Rhea" id="RHEA:13065"/>
        <dbReference type="ChEBI" id="CHEBI:15377"/>
        <dbReference type="ChEBI" id="CHEBI:15378"/>
        <dbReference type="ChEBI" id="CHEBI:30616"/>
        <dbReference type="ChEBI" id="CHEBI:43474"/>
        <dbReference type="ChEBI" id="CHEBI:456216"/>
        <dbReference type="EC" id="3.6.4.13"/>
    </reaction>
</comment>
<comment type="subcellular location">
    <subcellularLocation>
        <location evidence="1">Cytoplasm</location>
    </subcellularLocation>
</comment>
<comment type="similarity">
    <text evidence="1">Belongs to the DEAD box helicase family. DeaD/CsdA subfamily.</text>
</comment>
<reference key="1">
    <citation type="journal article" date="2003" name="Proc. Natl. Acad. Sci. U.S.A.">
        <title>Reductive genome evolution in Buchnera aphidicola.</title>
        <authorList>
            <person name="van Ham R.C.H.J."/>
            <person name="Kamerbeek J."/>
            <person name="Palacios C."/>
            <person name="Rausell C."/>
            <person name="Abascal F."/>
            <person name="Bastolla U."/>
            <person name="Fernandez J.M."/>
            <person name="Jimenez L."/>
            <person name="Postigo M."/>
            <person name="Silva F.J."/>
            <person name="Tamames J."/>
            <person name="Viguera E."/>
            <person name="Latorre A."/>
            <person name="Valencia A."/>
            <person name="Moran F."/>
            <person name="Moya A."/>
        </authorList>
    </citation>
    <scope>NUCLEOTIDE SEQUENCE [LARGE SCALE GENOMIC DNA]</scope>
    <source>
        <strain>Bp</strain>
    </source>
</reference>
<accession>Q89AF9</accession>
<dbReference type="EC" id="3.6.4.13" evidence="1"/>
<dbReference type="EMBL" id="AE016826">
    <property type="protein sequence ID" value="AAO27056.1"/>
    <property type="molecule type" value="Genomic_DNA"/>
</dbReference>
<dbReference type="RefSeq" id="WP_011091457.1">
    <property type="nucleotide sequence ID" value="NC_004545.1"/>
</dbReference>
<dbReference type="SMR" id="Q89AF9"/>
<dbReference type="STRING" id="224915.bbp_335"/>
<dbReference type="KEGG" id="bab:bbp_335"/>
<dbReference type="eggNOG" id="COG0513">
    <property type="taxonomic scope" value="Bacteria"/>
</dbReference>
<dbReference type="HOGENOM" id="CLU_003041_21_1_6"/>
<dbReference type="OrthoDB" id="9805696at2"/>
<dbReference type="Proteomes" id="UP000000601">
    <property type="component" value="Chromosome"/>
</dbReference>
<dbReference type="GO" id="GO:0005829">
    <property type="term" value="C:cytosol"/>
    <property type="evidence" value="ECO:0007669"/>
    <property type="project" value="TreeGrafter"/>
</dbReference>
<dbReference type="GO" id="GO:0005840">
    <property type="term" value="C:ribosome"/>
    <property type="evidence" value="ECO:0007669"/>
    <property type="project" value="TreeGrafter"/>
</dbReference>
<dbReference type="GO" id="GO:0005524">
    <property type="term" value="F:ATP binding"/>
    <property type="evidence" value="ECO:0007669"/>
    <property type="project" value="UniProtKB-UniRule"/>
</dbReference>
<dbReference type="GO" id="GO:0016887">
    <property type="term" value="F:ATP hydrolysis activity"/>
    <property type="evidence" value="ECO:0007669"/>
    <property type="project" value="RHEA"/>
</dbReference>
<dbReference type="GO" id="GO:0003724">
    <property type="term" value="F:RNA helicase activity"/>
    <property type="evidence" value="ECO:0007669"/>
    <property type="project" value="UniProtKB-UniRule"/>
</dbReference>
<dbReference type="GO" id="GO:0033592">
    <property type="term" value="F:RNA strand annealing activity"/>
    <property type="evidence" value="ECO:0007669"/>
    <property type="project" value="TreeGrafter"/>
</dbReference>
<dbReference type="GO" id="GO:0070417">
    <property type="term" value="P:cellular response to cold"/>
    <property type="evidence" value="ECO:0007669"/>
    <property type="project" value="InterPro"/>
</dbReference>
<dbReference type="GO" id="GO:0000027">
    <property type="term" value="P:ribosomal large subunit assembly"/>
    <property type="evidence" value="ECO:0007669"/>
    <property type="project" value="UniProtKB-UniRule"/>
</dbReference>
<dbReference type="GO" id="GO:0006401">
    <property type="term" value="P:RNA catabolic process"/>
    <property type="evidence" value="ECO:0007669"/>
    <property type="project" value="UniProtKB-UniRule"/>
</dbReference>
<dbReference type="CDD" id="cd00268">
    <property type="entry name" value="DEADc"/>
    <property type="match status" value="1"/>
</dbReference>
<dbReference type="CDD" id="cd12499">
    <property type="entry name" value="RRM_EcCsdA_like"/>
    <property type="match status" value="1"/>
</dbReference>
<dbReference type="CDD" id="cd18787">
    <property type="entry name" value="SF2_C_DEAD"/>
    <property type="match status" value="1"/>
</dbReference>
<dbReference type="FunFam" id="3.30.70.330:FF:000068">
    <property type="entry name" value="ATP-dependent RNA helicase DeaD"/>
    <property type="match status" value="1"/>
</dbReference>
<dbReference type="FunFam" id="3.40.50.300:FF:000374">
    <property type="entry name" value="ATP-dependent RNA helicase DeaD"/>
    <property type="match status" value="1"/>
</dbReference>
<dbReference type="FunFam" id="3.40.50.300:FF:000108">
    <property type="entry name" value="ATP-dependent RNA helicase RhlE"/>
    <property type="match status" value="1"/>
</dbReference>
<dbReference type="Gene3D" id="3.30.70.330">
    <property type="match status" value="1"/>
</dbReference>
<dbReference type="Gene3D" id="3.40.50.300">
    <property type="entry name" value="P-loop containing nucleotide triphosphate hydrolases"/>
    <property type="match status" value="2"/>
</dbReference>
<dbReference type="HAMAP" id="MF_00964">
    <property type="entry name" value="DEAD_helicase_DeaD"/>
    <property type="match status" value="1"/>
</dbReference>
<dbReference type="InterPro" id="IPR034415">
    <property type="entry name" value="CsdA_RRM"/>
</dbReference>
<dbReference type="InterPro" id="IPR005580">
    <property type="entry name" value="DbpA/CsdA_RNA-bd_dom"/>
</dbReference>
<dbReference type="InterPro" id="IPR011545">
    <property type="entry name" value="DEAD/DEAH_box_helicase_dom"/>
</dbReference>
<dbReference type="InterPro" id="IPR050547">
    <property type="entry name" value="DEAD_box_RNA_helicases"/>
</dbReference>
<dbReference type="InterPro" id="IPR028618">
    <property type="entry name" value="DEAD_helicase_DeaD"/>
</dbReference>
<dbReference type="InterPro" id="IPR014001">
    <property type="entry name" value="Helicase_ATP-bd"/>
</dbReference>
<dbReference type="InterPro" id="IPR001650">
    <property type="entry name" value="Helicase_C-like"/>
</dbReference>
<dbReference type="InterPro" id="IPR012677">
    <property type="entry name" value="Nucleotide-bd_a/b_plait_sf"/>
</dbReference>
<dbReference type="InterPro" id="IPR027417">
    <property type="entry name" value="P-loop_NTPase"/>
</dbReference>
<dbReference type="InterPro" id="IPR000629">
    <property type="entry name" value="RNA-helicase_DEAD-box_CS"/>
</dbReference>
<dbReference type="InterPro" id="IPR014014">
    <property type="entry name" value="RNA_helicase_DEAD_Q_motif"/>
</dbReference>
<dbReference type="PANTHER" id="PTHR47963:SF8">
    <property type="entry name" value="ATP-DEPENDENT RNA HELICASE DEAD"/>
    <property type="match status" value="1"/>
</dbReference>
<dbReference type="PANTHER" id="PTHR47963">
    <property type="entry name" value="DEAD-BOX ATP-DEPENDENT RNA HELICASE 47, MITOCHONDRIAL"/>
    <property type="match status" value="1"/>
</dbReference>
<dbReference type="Pfam" id="PF03880">
    <property type="entry name" value="DbpA"/>
    <property type="match status" value="1"/>
</dbReference>
<dbReference type="Pfam" id="PF00270">
    <property type="entry name" value="DEAD"/>
    <property type="match status" value="1"/>
</dbReference>
<dbReference type="Pfam" id="PF25399">
    <property type="entry name" value="DeaD_dimer"/>
    <property type="match status" value="1"/>
</dbReference>
<dbReference type="Pfam" id="PF00271">
    <property type="entry name" value="Helicase_C"/>
    <property type="match status" value="1"/>
</dbReference>
<dbReference type="SMART" id="SM00487">
    <property type="entry name" value="DEXDc"/>
    <property type="match status" value="1"/>
</dbReference>
<dbReference type="SMART" id="SM00490">
    <property type="entry name" value="HELICc"/>
    <property type="match status" value="1"/>
</dbReference>
<dbReference type="SUPFAM" id="SSF52540">
    <property type="entry name" value="P-loop containing nucleoside triphosphate hydrolases"/>
    <property type="match status" value="1"/>
</dbReference>
<dbReference type="PROSITE" id="PS00039">
    <property type="entry name" value="DEAD_ATP_HELICASE"/>
    <property type="match status" value="1"/>
</dbReference>
<dbReference type="PROSITE" id="PS51192">
    <property type="entry name" value="HELICASE_ATP_BIND_1"/>
    <property type="match status" value="1"/>
</dbReference>
<dbReference type="PROSITE" id="PS51194">
    <property type="entry name" value="HELICASE_CTER"/>
    <property type="match status" value="1"/>
</dbReference>
<dbReference type="PROSITE" id="PS51195">
    <property type="entry name" value="Q_MOTIF"/>
    <property type="match status" value="1"/>
</dbReference>
<sequence length="602" mass="68490">MTHTNMTFSSFGLNSCIITALNDIGYVQPSPIQAACIPYLIKGKDVLGMAQTGSGKTAAFALPLLHNIKLDVRVPQILVLTPTRELAVQVAEAFSNFSKKLIGVHVLALYGGQRYDLQLKSLRKGPQIIVGTPGRLLDHLKRRTLSLSNLHSLVLDEADEMLRMGFIEDVETIMTEIPDRHQTALFSATMPEAIRRISRRFMKNPKEIRIQSNITTRPDIQQSYWMVYGKKTDALIRFLEAEDFSATIIFVRTKNATLEVSEVLERYGYNSAALNGDMNQSLREQTLEKLKDGRLDILIATDVAARGLDVDRISFVINYDIPMDSESYVHRIGRTGRAGRKGKALLFVENRERRLLRNIERAMNISISEVNLPKSDFLSKRRLEKFAQKVQIQLDSKDLHEYRGLLPKLQPNNNSLDIESLAAALLKMAQGERSLIVKPESIVRARHLKIKDTYRNNNYKSLNYVSRYNRDKNVDLYRIDVGRNDGVEVRHIVGAIANEGDISSRKIGNVRLFSNYSTIELPKGLSNTLPKTFIRTKILNKFINIKLLYNSNFKGNYNDIKDVKVYNSNKLRSKKMNNKKFVSSGVRKKIKTNISCNRRRSV</sequence>
<proteinExistence type="inferred from homology"/>
<organism>
    <name type="scientific">Buchnera aphidicola subsp. Baizongia pistaciae (strain Bp)</name>
    <dbReference type="NCBI Taxonomy" id="224915"/>
    <lineage>
        <taxon>Bacteria</taxon>
        <taxon>Pseudomonadati</taxon>
        <taxon>Pseudomonadota</taxon>
        <taxon>Gammaproteobacteria</taxon>
        <taxon>Enterobacterales</taxon>
        <taxon>Erwiniaceae</taxon>
        <taxon>Buchnera</taxon>
    </lineage>
</organism>
<keyword id="KW-0067">ATP-binding</keyword>
<keyword id="KW-0963">Cytoplasm</keyword>
<keyword id="KW-0347">Helicase</keyword>
<keyword id="KW-0378">Hydrolase</keyword>
<keyword id="KW-0547">Nucleotide-binding</keyword>
<keyword id="KW-1185">Reference proteome</keyword>
<keyword id="KW-0694">RNA-binding</keyword>
<keyword id="KW-0346">Stress response</keyword>
<name>DEAD_BUCBP</name>